<comment type="function">
    <text evidence="1">Catalyzes amidations at positions B, D, E, and G on adenosylcobyrinic A,C-diamide. NH(2) groups are provided by glutamine, and one molecule of ATP is hydrogenolyzed for each amidation.</text>
</comment>
<comment type="pathway">
    <text evidence="1">Cofactor biosynthesis; adenosylcobalamin biosynthesis.</text>
</comment>
<comment type="similarity">
    <text evidence="1">Belongs to the CobB/CobQ family. CobQ subfamily.</text>
</comment>
<organism>
    <name type="scientific">Halobacterium salinarum (strain ATCC 700922 / JCM 11081 / NRC-1)</name>
    <name type="common">Halobacterium halobium</name>
    <dbReference type="NCBI Taxonomy" id="64091"/>
    <lineage>
        <taxon>Archaea</taxon>
        <taxon>Methanobacteriati</taxon>
        <taxon>Methanobacteriota</taxon>
        <taxon>Stenosarchaea group</taxon>
        <taxon>Halobacteria</taxon>
        <taxon>Halobacteriales</taxon>
        <taxon>Halobacteriaceae</taxon>
        <taxon>Halobacterium</taxon>
        <taxon>Halobacterium salinarum NRC-34001</taxon>
    </lineage>
</organism>
<feature type="chain" id="PRO_0000141346" description="Probable cobyric acid synthase">
    <location>
        <begin position="1"/>
        <end position="512"/>
    </location>
</feature>
<feature type="domain" description="GATase cobBQ-type" evidence="1">
    <location>
        <begin position="275"/>
        <end position="460"/>
    </location>
</feature>
<feature type="active site" description="Nucleophile" evidence="1">
    <location>
        <position position="353"/>
    </location>
</feature>
<feature type="active site" evidence="1">
    <location>
        <position position="452"/>
    </location>
</feature>
<sequence>MTAGEDCRTILVAGTASHVGKSTVAAGLCRLLADRGLSVAPFKAQNMSNNARAVPVADGAPPAADPWGEIGVSQYVQARAARTAASTDHNPVLLKPRGDAESQLVVDGRAVGHYSAGSYYESHWADARDAAAAAHARLAADNDVVVAEGAGSIAELNLHDRDLANLETARFADATILLVVDIERGGAFASLHGTLALLPDDIRDRVAGAVITKFRGDRSLLDPGITEIEARTGVPVLGVIPHDDPGLPAEDSVSLPDPSERVVDGGQDGVPDAASVTVAVPHLPHISNFTDLAPLARTPGVRVAYQPLDAPLAAADAVVLPGTKNTVDDLRAAREAGLGRALRAFDGPIVGLCGGYQMLGDRITDAATESTADDLGAVDGVGVLPVETAFQPDKRVEAVTRELADCGALGGATGAVTGYEIHMGRTTVPDGVPQPVGPASAARGRVLGTYLHGLFGNDAARRGFRDAVFAAAGVEQPAPADTPDQSPSDAAAALVDAHVDLDPLGVPPAPDA</sequence>
<accession>Q9HPL5</accession>
<gene>
    <name evidence="1" type="primary">cobQ</name>
    <name type="synonym">cbiP</name>
    <name type="ordered locus">VNG_1576G</name>
</gene>
<evidence type="ECO:0000255" key="1">
    <source>
        <dbReference type="HAMAP-Rule" id="MF_00028"/>
    </source>
</evidence>
<protein>
    <recommendedName>
        <fullName evidence="1">Probable cobyric acid synthase</fullName>
    </recommendedName>
</protein>
<reference key="1">
    <citation type="journal article" date="2000" name="Proc. Natl. Acad. Sci. U.S.A.">
        <title>Genome sequence of Halobacterium species NRC-1.</title>
        <authorList>
            <person name="Ng W.V."/>
            <person name="Kennedy S.P."/>
            <person name="Mahairas G.G."/>
            <person name="Berquist B."/>
            <person name="Pan M."/>
            <person name="Shukla H.D."/>
            <person name="Lasky S.R."/>
            <person name="Baliga N.S."/>
            <person name="Thorsson V."/>
            <person name="Sbrogna J."/>
            <person name="Swartzell S."/>
            <person name="Weir D."/>
            <person name="Hall J."/>
            <person name="Dahl T.A."/>
            <person name="Welti R."/>
            <person name="Goo Y.A."/>
            <person name="Leithauser B."/>
            <person name="Keller K."/>
            <person name="Cruz R."/>
            <person name="Danson M.J."/>
            <person name="Hough D.W."/>
            <person name="Maddocks D.G."/>
            <person name="Jablonski P.E."/>
            <person name="Krebs M.P."/>
            <person name="Angevine C.M."/>
            <person name="Dale H."/>
            <person name="Isenbarger T.A."/>
            <person name="Peck R.F."/>
            <person name="Pohlschroder M."/>
            <person name="Spudich J.L."/>
            <person name="Jung K.-H."/>
            <person name="Alam M."/>
            <person name="Freitas T."/>
            <person name="Hou S."/>
            <person name="Daniels C.J."/>
            <person name="Dennis P.P."/>
            <person name="Omer A.D."/>
            <person name="Ebhardt H."/>
            <person name="Lowe T.M."/>
            <person name="Liang P."/>
            <person name="Riley M."/>
            <person name="Hood L."/>
            <person name="DasSarma S."/>
        </authorList>
    </citation>
    <scope>NUCLEOTIDE SEQUENCE [LARGE SCALE GENOMIC DNA]</scope>
    <source>
        <strain>ATCC 700922 / JCM 11081 / NRC-1</strain>
    </source>
</reference>
<dbReference type="EMBL" id="AE004437">
    <property type="protein sequence ID" value="AAG19852.1"/>
    <property type="molecule type" value="Genomic_DNA"/>
</dbReference>
<dbReference type="PIR" id="H84310">
    <property type="entry name" value="H84310"/>
</dbReference>
<dbReference type="RefSeq" id="WP_010903150.1">
    <property type="nucleotide sequence ID" value="NC_002607.1"/>
</dbReference>
<dbReference type="SMR" id="Q9HPL5"/>
<dbReference type="FunCoup" id="Q9HPL5">
    <property type="interactions" value="67"/>
</dbReference>
<dbReference type="STRING" id="64091.VNG_1576G"/>
<dbReference type="PaxDb" id="64091-VNG_1576G"/>
<dbReference type="KEGG" id="hal:VNG_1576G"/>
<dbReference type="PATRIC" id="fig|64091.14.peg.1205"/>
<dbReference type="HOGENOM" id="CLU_019250_2_2_2"/>
<dbReference type="InParanoid" id="Q9HPL5"/>
<dbReference type="OrthoDB" id="53136at2157"/>
<dbReference type="PhylomeDB" id="Q9HPL5"/>
<dbReference type="UniPathway" id="UPA00148"/>
<dbReference type="Proteomes" id="UP000000554">
    <property type="component" value="Chromosome"/>
</dbReference>
<dbReference type="GO" id="GO:0015420">
    <property type="term" value="F:ABC-type vitamin B12 transporter activity"/>
    <property type="evidence" value="ECO:0007669"/>
    <property type="project" value="UniProtKB-UniRule"/>
</dbReference>
<dbReference type="GO" id="GO:0003824">
    <property type="term" value="F:catalytic activity"/>
    <property type="evidence" value="ECO:0007669"/>
    <property type="project" value="InterPro"/>
</dbReference>
<dbReference type="GO" id="GO:0009236">
    <property type="term" value="P:cobalamin biosynthetic process"/>
    <property type="evidence" value="ECO:0007669"/>
    <property type="project" value="UniProtKB-UniRule"/>
</dbReference>
<dbReference type="CDD" id="cd01750">
    <property type="entry name" value="GATase1_CobQ"/>
    <property type="match status" value="1"/>
</dbReference>
<dbReference type="Gene3D" id="3.40.50.880">
    <property type="match status" value="1"/>
</dbReference>
<dbReference type="Gene3D" id="3.40.50.300">
    <property type="entry name" value="P-loop containing nucleotide triphosphate hydrolases"/>
    <property type="match status" value="1"/>
</dbReference>
<dbReference type="HAMAP" id="MF_00028">
    <property type="entry name" value="CobQ"/>
    <property type="match status" value="1"/>
</dbReference>
<dbReference type="InterPro" id="IPR029062">
    <property type="entry name" value="Class_I_gatase-like"/>
</dbReference>
<dbReference type="InterPro" id="IPR002586">
    <property type="entry name" value="CobQ/CobB/MinD/ParA_Nub-bd_dom"/>
</dbReference>
<dbReference type="InterPro" id="IPR033949">
    <property type="entry name" value="CobQ_GATase1"/>
</dbReference>
<dbReference type="InterPro" id="IPR004459">
    <property type="entry name" value="CobQ_synth"/>
</dbReference>
<dbReference type="InterPro" id="IPR011698">
    <property type="entry name" value="GATase_3"/>
</dbReference>
<dbReference type="InterPro" id="IPR027417">
    <property type="entry name" value="P-loop_NTPase"/>
</dbReference>
<dbReference type="NCBIfam" id="TIGR00313">
    <property type="entry name" value="cobQ"/>
    <property type="match status" value="1"/>
</dbReference>
<dbReference type="NCBIfam" id="NF001989">
    <property type="entry name" value="PRK00784.1"/>
    <property type="match status" value="1"/>
</dbReference>
<dbReference type="PANTHER" id="PTHR21343:SF1">
    <property type="entry name" value="COBYRIC ACID SYNTHASE"/>
    <property type="match status" value="1"/>
</dbReference>
<dbReference type="PANTHER" id="PTHR21343">
    <property type="entry name" value="DETHIOBIOTIN SYNTHETASE"/>
    <property type="match status" value="1"/>
</dbReference>
<dbReference type="Pfam" id="PF01656">
    <property type="entry name" value="CbiA"/>
    <property type="match status" value="1"/>
</dbReference>
<dbReference type="Pfam" id="PF07685">
    <property type="entry name" value="GATase_3"/>
    <property type="match status" value="1"/>
</dbReference>
<dbReference type="SUPFAM" id="SSF52317">
    <property type="entry name" value="Class I glutamine amidotransferase-like"/>
    <property type="match status" value="1"/>
</dbReference>
<dbReference type="SUPFAM" id="SSF52540">
    <property type="entry name" value="P-loop containing nucleoside triphosphate hydrolases"/>
    <property type="match status" value="1"/>
</dbReference>
<dbReference type="PROSITE" id="PS51274">
    <property type="entry name" value="GATASE_COBBQ"/>
    <property type="match status" value="1"/>
</dbReference>
<proteinExistence type="inferred from homology"/>
<name>COBQ_HALSA</name>
<keyword id="KW-0169">Cobalamin biosynthesis</keyword>
<keyword id="KW-0315">Glutamine amidotransferase</keyword>
<keyword id="KW-1185">Reference proteome</keyword>